<comment type="function">
    <text evidence="1">Catalyzes a salvage reaction resulting in the formation of AMP, that is energically less costly than de novo synthesis.</text>
</comment>
<comment type="catalytic activity">
    <reaction evidence="1">
        <text>AMP + diphosphate = 5-phospho-alpha-D-ribose 1-diphosphate + adenine</text>
        <dbReference type="Rhea" id="RHEA:16609"/>
        <dbReference type="ChEBI" id="CHEBI:16708"/>
        <dbReference type="ChEBI" id="CHEBI:33019"/>
        <dbReference type="ChEBI" id="CHEBI:58017"/>
        <dbReference type="ChEBI" id="CHEBI:456215"/>
        <dbReference type="EC" id="2.4.2.7"/>
    </reaction>
</comment>
<comment type="pathway">
    <text evidence="1">Purine metabolism; AMP biosynthesis via salvage pathway; AMP from adenine: step 1/1.</text>
</comment>
<comment type="subunit">
    <text evidence="1">Homodimer.</text>
</comment>
<comment type="subcellular location">
    <subcellularLocation>
        <location evidence="1">Cytoplasm</location>
    </subcellularLocation>
</comment>
<comment type="similarity">
    <text evidence="1">Belongs to the purine/pyrimidine phosphoribosyltransferase family.</text>
</comment>
<protein>
    <recommendedName>
        <fullName evidence="1">Adenine phosphoribosyltransferase</fullName>
        <shortName evidence="1">APRT</shortName>
        <ecNumber evidence="1">2.4.2.7</ecNumber>
    </recommendedName>
</protein>
<dbReference type="EC" id="2.4.2.7" evidence="1"/>
<dbReference type="EMBL" id="BX950229">
    <property type="protein sequence ID" value="CAF30216.1"/>
    <property type="molecule type" value="Genomic_DNA"/>
</dbReference>
<dbReference type="RefSeq" id="WP_011170604.1">
    <property type="nucleotide sequence ID" value="NC_005791.1"/>
</dbReference>
<dbReference type="SMR" id="Q6LZG8"/>
<dbReference type="STRING" id="267377.MMP0660"/>
<dbReference type="EnsemblBacteria" id="CAF30216">
    <property type="protein sequence ID" value="CAF30216"/>
    <property type="gene ID" value="MMP0660"/>
</dbReference>
<dbReference type="GeneID" id="2761194"/>
<dbReference type="KEGG" id="mmp:MMP0660"/>
<dbReference type="PATRIC" id="fig|267377.15.peg.677"/>
<dbReference type="eggNOG" id="arCOG00030">
    <property type="taxonomic scope" value="Archaea"/>
</dbReference>
<dbReference type="HOGENOM" id="CLU_063339_3_0_2"/>
<dbReference type="OrthoDB" id="8323at2157"/>
<dbReference type="UniPathway" id="UPA00588">
    <property type="reaction ID" value="UER00646"/>
</dbReference>
<dbReference type="Proteomes" id="UP000000590">
    <property type="component" value="Chromosome"/>
</dbReference>
<dbReference type="GO" id="GO:0005737">
    <property type="term" value="C:cytoplasm"/>
    <property type="evidence" value="ECO:0007669"/>
    <property type="project" value="UniProtKB-SubCell"/>
</dbReference>
<dbReference type="GO" id="GO:0002055">
    <property type="term" value="F:adenine binding"/>
    <property type="evidence" value="ECO:0007669"/>
    <property type="project" value="TreeGrafter"/>
</dbReference>
<dbReference type="GO" id="GO:0003999">
    <property type="term" value="F:adenine phosphoribosyltransferase activity"/>
    <property type="evidence" value="ECO:0007669"/>
    <property type="project" value="UniProtKB-UniRule"/>
</dbReference>
<dbReference type="GO" id="GO:0016208">
    <property type="term" value="F:AMP binding"/>
    <property type="evidence" value="ECO:0007669"/>
    <property type="project" value="TreeGrafter"/>
</dbReference>
<dbReference type="GO" id="GO:0006168">
    <property type="term" value="P:adenine salvage"/>
    <property type="evidence" value="ECO:0007669"/>
    <property type="project" value="InterPro"/>
</dbReference>
<dbReference type="GO" id="GO:0044209">
    <property type="term" value="P:AMP salvage"/>
    <property type="evidence" value="ECO:0007669"/>
    <property type="project" value="UniProtKB-UniRule"/>
</dbReference>
<dbReference type="GO" id="GO:0006166">
    <property type="term" value="P:purine ribonucleoside salvage"/>
    <property type="evidence" value="ECO:0007669"/>
    <property type="project" value="UniProtKB-KW"/>
</dbReference>
<dbReference type="CDD" id="cd06223">
    <property type="entry name" value="PRTases_typeI"/>
    <property type="match status" value="1"/>
</dbReference>
<dbReference type="FunFam" id="3.40.50.2020:FF:000004">
    <property type="entry name" value="Adenine phosphoribosyltransferase"/>
    <property type="match status" value="1"/>
</dbReference>
<dbReference type="Gene3D" id="3.40.50.2020">
    <property type="match status" value="1"/>
</dbReference>
<dbReference type="HAMAP" id="MF_00004">
    <property type="entry name" value="Aden_phosphoribosyltr"/>
    <property type="match status" value="1"/>
</dbReference>
<dbReference type="InterPro" id="IPR005764">
    <property type="entry name" value="Ade_phspho_trans"/>
</dbReference>
<dbReference type="InterPro" id="IPR000836">
    <property type="entry name" value="PRibTrfase_dom"/>
</dbReference>
<dbReference type="InterPro" id="IPR029057">
    <property type="entry name" value="PRTase-like"/>
</dbReference>
<dbReference type="InterPro" id="IPR050054">
    <property type="entry name" value="UPRTase/APRTase"/>
</dbReference>
<dbReference type="NCBIfam" id="TIGR01090">
    <property type="entry name" value="apt"/>
    <property type="match status" value="1"/>
</dbReference>
<dbReference type="NCBIfam" id="NF002633">
    <property type="entry name" value="PRK02304.1-2"/>
    <property type="match status" value="1"/>
</dbReference>
<dbReference type="NCBIfam" id="NF002634">
    <property type="entry name" value="PRK02304.1-3"/>
    <property type="match status" value="1"/>
</dbReference>
<dbReference type="NCBIfam" id="NF002636">
    <property type="entry name" value="PRK02304.1-5"/>
    <property type="match status" value="1"/>
</dbReference>
<dbReference type="NCBIfam" id="NF009211">
    <property type="entry name" value="PRK12560.1"/>
    <property type="match status" value="1"/>
</dbReference>
<dbReference type="PANTHER" id="PTHR32315">
    <property type="entry name" value="ADENINE PHOSPHORIBOSYLTRANSFERASE"/>
    <property type="match status" value="1"/>
</dbReference>
<dbReference type="PANTHER" id="PTHR32315:SF3">
    <property type="entry name" value="ADENINE PHOSPHORIBOSYLTRANSFERASE"/>
    <property type="match status" value="1"/>
</dbReference>
<dbReference type="Pfam" id="PF00156">
    <property type="entry name" value="Pribosyltran"/>
    <property type="match status" value="1"/>
</dbReference>
<dbReference type="SUPFAM" id="SSF53271">
    <property type="entry name" value="PRTase-like"/>
    <property type="match status" value="1"/>
</dbReference>
<name>APT_METMP</name>
<accession>Q6LZG8</accession>
<sequence length="172" mass="18982">MDLRKKIRIVENFPIEGISFKDVTPILKDPKAMKHTTKEIAKYLEDKNVDVVVGPEARGFLFGVPVAHELDIGFVPVRKPGKLPYKTFSVDYALEYGSDSLEIHSDGIEKGQNVAIVDDLLATGGTVLGVSKLVEKLGGHVSALNFVIELTELKGRDKLKGYDIQSLVKYDL</sequence>
<proteinExistence type="inferred from homology"/>
<organism>
    <name type="scientific">Methanococcus maripaludis (strain DSM 14266 / JCM 13030 / NBRC 101832 / S2 / LL)</name>
    <dbReference type="NCBI Taxonomy" id="267377"/>
    <lineage>
        <taxon>Archaea</taxon>
        <taxon>Methanobacteriati</taxon>
        <taxon>Methanobacteriota</taxon>
        <taxon>Methanomada group</taxon>
        <taxon>Methanococci</taxon>
        <taxon>Methanococcales</taxon>
        <taxon>Methanococcaceae</taxon>
        <taxon>Methanococcus</taxon>
    </lineage>
</organism>
<gene>
    <name evidence="1" type="primary">apt2</name>
    <name type="ordered locus">MMP0660</name>
</gene>
<keyword id="KW-0963">Cytoplasm</keyword>
<keyword id="KW-0328">Glycosyltransferase</keyword>
<keyword id="KW-0660">Purine salvage</keyword>
<keyword id="KW-1185">Reference proteome</keyword>
<keyword id="KW-0808">Transferase</keyword>
<reference key="1">
    <citation type="journal article" date="2004" name="J. Bacteriol.">
        <title>Complete genome sequence of the genetically tractable hydrogenotrophic methanogen Methanococcus maripaludis.</title>
        <authorList>
            <person name="Hendrickson E.L."/>
            <person name="Kaul R."/>
            <person name="Zhou Y."/>
            <person name="Bovee D."/>
            <person name="Chapman P."/>
            <person name="Chung J."/>
            <person name="Conway de Macario E."/>
            <person name="Dodsworth J.A."/>
            <person name="Gillett W."/>
            <person name="Graham D.E."/>
            <person name="Hackett M."/>
            <person name="Haydock A.K."/>
            <person name="Kang A."/>
            <person name="Land M.L."/>
            <person name="Levy R."/>
            <person name="Lie T.J."/>
            <person name="Major T.A."/>
            <person name="Moore B.C."/>
            <person name="Porat I."/>
            <person name="Palmeiri A."/>
            <person name="Rouse G."/>
            <person name="Saenphimmachak C."/>
            <person name="Soell D."/>
            <person name="Van Dien S."/>
            <person name="Wang T."/>
            <person name="Whitman W.B."/>
            <person name="Xia Q."/>
            <person name="Zhang Y."/>
            <person name="Larimer F.W."/>
            <person name="Olson M.V."/>
            <person name="Leigh J.A."/>
        </authorList>
    </citation>
    <scope>NUCLEOTIDE SEQUENCE [LARGE SCALE GENOMIC DNA]</scope>
    <source>
        <strain>DSM 14266 / JCM 13030 / NBRC 101832 / S2 / LL</strain>
    </source>
</reference>
<feature type="chain" id="PRO_0000149499" description="Adenine phosphoribosyltransferase">
    <location>
        <begin position="1"/>
        <end position="172"/>
    </location>
</feature>
<evidence type="ECO:0000255" key="1">
    <source>
        <dbReference type="HAMAP-Rule" id="MF_00004"/>
    </source>
</evidence>